<accession>J4UHQ8</accession>
<organism>
    <name type="scientific">Beauveria bassiana (strain ARSEF 2860)</name>
    <name type="common">White muscardine disease fungus</name>
    <name type="synonym">Tritirachium shiotae</name>
    <dbReference type="NCBI Taxonomy" id="655819"/>
    <lineage>
        <taxon>Eukaryota</taxon>
        <taxon>Fungi</taxon>
        <taxon>Dikarya</taxon>
        <taxon>Ascomycota</taxon>
        <taxon>Pezizomycotina</taxon>
        <taxon>Sordariomycetes</taxon>
        <taxon>Hypocreomycetidae</taxon>
        <taxon>Hypocreales</taxon>
        <taxon>Cordycipitaceae</taxon>
        <taxon>Beauveria</taxon>
    </lineage>
</organism>
<keyword id="KW-1185">Reference proteome</keyword>
<keyword id="KW-0808">Transferase</keyword>
<keyword id="KW-0843">Virulence</keyword>
<protein>
    <recommendedName>
        <fullName evidence="4">Glutathione S-transferase-like protein OpS6</fullName>
        <ecNumber evidence="6">2.5.1.-</ecNumber>
    </recommendedName>
    <alternativeName>
        <fullName evidence="4">Oosporein biosynthesis protein 6</fullName>
    </alternativeName>
</protein>
<comment type="function">
    <text evidence="3">Glutathione S-transferase-like protein; part of the gene cluster that mediates the biosynthesis of the bibenzoquinone oosporein, a metabolite required for fungal virulence that acts by evading host immunity to facilitate fungal multiplication in insects (PubMed:26305932). The non-reducing polyketide synthase OpS1 produces orsellinic acid by condensing acetyl-CoA with 3 malonyl-CoA units (PubMed:26305932). Orsellinic acid is then hydroxylated to benzenetriol by the hydroxylase OpS4 (PubMed:26305932). The intermediate is oxidized either nonenzymatically to 5,5'-dideoxy-oosporein or enzymatically to benzenetetrol by the oxidoreductase OpS7 (PubMed:26305932). The latter is further dimerized to oosporein by the catalase OpS5 (PubMed:26305932). OpS6 probably functions en route for protecting cells against oxidative stress by scavenging any leaked free radical form of benzenetetrol by activating the thiol group of glutathione (PubMed:26305932).</text>
</comment>
<comment type="pathway">
    <text evidence="3">Secondary metabolite biosynthesis.</text>
</comment>
<comment type="induction">
    <text evidence="3">Expression is positively regulated by the oosporein cluster specific regulator OpS3 that binds the promoter at a 5'-CGGA-3' motif (PubMed:26305932). Expression is negatively regulated by the global transcription factor Msn2 that binds the stress-response element 5'-AGGGG-3' (PubMed:26305932).</text>
</comment>
<comment type="disruption phenotype">
    <text evidence="3">Does not impair the production of oosporein (PubMed:26305932).</text>
</comment>
<comment type="similarity">
    <text evidence="5">Belongs to the GST superfamily.</text>
</comment>
<dbReference type="EC" id="2.5.1.-" evidence="6"/>
<dbReference type="EMBL" id="JH725181">
    <property type="protein sequence ID" value="EJP62797.1"/>
    <property type="molecule type" value="Genomic_DNA"/>
</dbReference>
<dbReference type="RefSeq" id="XP_008601503.1">
    <property type="nucleotide sequence ID" value="XM_008603281.1"/>
</dbReference>
<dbReference type="SMR" id="J4UHQ8"/>
<dbReference type="FunCoup" id="J4UHQ8">
    <property type="interactions" value="666"/>
</dbReference>
<dbReference type="STRING" id="655819.J4UHQ8"/>
<dbReference type="GeneID" id="19891196"/>
<dbReference type="HOGENOM" id="CLU_011226_14_2_1"/>
<dbReference type="InParanoid" id="J4UHQ8"/>
<dbReference type="OrthoDB" id="877at474943"/>
<dbReference type="Proteomes" id="UP000002762">
    <property type="component" value="Unassembled WGS sequence"/>
</dbReference>
<dbReference type="GO" id="GO:0016740">
    <property type="term" value="F:transferase activity"/>
    <property type="evidence" value="ECO:0007669"/>
    <property type="project" value="UniProtKB-KW"/>
</dbReference>
<dbReference type="CDD" id="cd03048">
    <property type="entry name" value="GST_N_Ure2p_like"/>
    <property type="match status" value="1"/>
</dbReference>
<dbReference type="Gene3D" id="1.20.1050.130">
    <property type="match status" value="1"/>
</dbReference>
<dbReference type="InterPro" id="IPR010987">
    <property type="entry name" value="Glutathione-S-Trfase_C-like"/>
</dbReference>
<dbReference type="InterPro" id="IPR036282">
    <property type="entry name" value="Glutathione-S-Trfase_C_sf"/>
</dbReference>
<dbReference type="InterPro" id="IPR040079">
    <property type="entry name" value="Glutathione_S-Trfase"/>
</dbReference>
<dbReference type="InterPro" id="IPR004045">
    <property type="entry name" value="Glutathione_S-Trfase_N"/>
</dbReference>
<dbReference type="InterPro" id="IPR004046">
    <property type="entry name" value="GST_C"/>
</dbReference>
<dbReference type="InterPro" id="IPR036249">
    <property type="entry name" value="Thioredoxin-like_sf"/>
</dbReference>
<dbReference type="PANTHER" id="PTHR44051">
    <property type="entry name" value="GLUTATHIONE S-TRANSFERASE-RELATED"/>
    <property type="match status" value="1"/>
</dbReference>
<dbReference type="PANTHER" id="PTHR44051:SF3">
    <property type="entry name" value="TRANSCRIPTIONAL REGULATOR URE2"/>
    <property type="match status" value="1"/>
</dbReference>
<dbReference type="Pfam" id="PF14497">
    <property type="entry name" value="GST_C_3"/>
    <property type="match status" value="1"/>
</dbReference>
<dbReference type="Pfam" id="PF02798">
    <property type="entry name" value="GST_N"/>
    <property type="match status" value="1"/>
</dbReference>
<dbReference type="SFLD" id="SFLDS00019">
    <property type="entry name" value="Glutathione_Transferase_(cytos"/>
    <property type="match status" value="1"/>
</dbReference>
<dbReference type="SFLD" id="SFLDG00358">
    <property type="entry name" value="Main_(cytGST)"/>
    <property type="match status" value="1"/>
</dbReference>
<dbReference type="SUPFAM" id="SSF47616">
    <property type="entry name" value="GST C-terminal domain-like"/>
    <property type="match status" value="1"/>
</dbReference>
<dbReference type="SUPFAM" id="SSF52833">
    <property type="entry name" value="Thioredoxin-like"/>
    <property type="match status" value="1"/>
</dbReference>
<dbReference type="PROSITE" id="PS50405">
    <property type="entry name" value="GST_CTER"/>
    <property type="match status" value="1"/>
</dbReference>
<dbReference type="PROSITE" id="PS50404">
    <property type="entry name" value="GST_NTER"/>
    <property type="match status" value="1"/>
</dbReference>
<evidence type="ECO:0000255" key="1">
    <source>
        <dbReference type="PROSITE-ProRule" id="PRU00684"/>
    </source>
</evidence>
<evidence type="ECO:0000255" key="2">
    <source>
        <dbReference type="PROSITE-ProRule" id="PRU00685"/>
    </source>
</evidence>
<evidence type="ECO:0000269" key="3">
    <source>
    </source>
</evidence>
<evidence type="ECO:0000303" key="4">
    <source>
    </source>
</evidence>
<evidence type="ECO:0000305" key="5"/>
<evidence type="ECO:0000305" key="6">
    <source>
    </source>
</evidence>
<feature type="chain" id="PRO_0000438576" description="Glutathione S-transferase-like protein OpS6">
    <location>
        <begin position="1"/>
        <end position="218"/>
    </location>
</feature>
<feature type="domain" description="GST N-terminal" evidence="1">
    <location>
        <begin position="5"/>
        <end position="86"/>
    </location>
</feature>
<feature type="domain" description="GST C-terminal" evidence="2">
    <location>
        <begin position="92"/>
        <end position="218"/>
    </location>
</feature>
<name>OPS6_BEAB2</name>
<sequence length="218" mass="24380">MASLQPIKLYAHKKGPNPWKVALILEELGLPYETTYLEFPDAKVEPYISLNPNGKLPAIQDPNHSIELFESGAIIEYLIEQYDKDGKLSHESLQDKSLARAWLHLQMSAQAPVIGYKVWMGRTYDASQIVSANEFLTLEIKRVLGVLDKHLAKMGGPYLLGSKVSYADLAFVPHYMMLPLFVPDYDPATEYPHFAAWLAALKERPAVKKIAATKAALA</sequence>
<reference key="1">
    <citation type="journal article" date="2012" name="Sci. Rep.">
        <title>Genomic perspectives on the evolution of fungal entomopathogenicity in Beauveria bassiana.</title>
        <authorList>
            <person name="Xiao G."/>
            <person name="Ying S.-H."/>
            <person name="Zheng P."/>
            <person name="Wang Z.-L."/>
            <person name="Zhang S."/>
            <person name="Xie X.-Q."/>
            <person name="Shang Y."/>
            <person name="St Leger R.J."/>
            <person name="Zhao G.-P."/>
            <person name="Wang C."/>
            <person name="Feng M.-G."/>
        </authorList>
    </citation>
    <scope>NUCLEOTIDE SEQUENCE [LARGE SCALE GENOMIC DNA]</scope>
    <source>
        <strain>ARSEF 2860</strain>
    </source>
</reference>
<reference key="2">
    <citation type="journal article" date="2015" name="Proc. Natl. Acad. Sci. U.S.A.">
        <title>Fungal biosynthesis of the bibenzoquinone oosporein to evade insect immunity.</title>
        <authorList>
            <person name="Feng P."/>
            <person name="Shang Y."/>
            <person name="Cen K."/>
            <person name="Wang C."/>
        </authorList>
    </citation>
    <scope>FUNCTION</scope>
    <scope>DISRUPTION PHENOTYPE</scope>
    <scope>INDUCTION</scope>
    <scope>PATHWAY</scope>
</reference>
<gene>
    <name evidence="4" type="primary">OpS6</name>
    <name type="ORF">BBA_08184</name>
</gene>
<proteinExistence type="evidence at transcript level"/>